<evidence type="ECO:0000250" key="1"/>
<evidence type="ECO:0000255" key="2"/>
<evidence type="ECO:0000303" key="3">
    <source>
    </source>
</evidence>
<evidence type="ECO:0000305" key="4"/>
<proteinExistence type="evidence at transcript level"/>
<reference key="1">
    <citation type="journal article" date="1991" name="J. Neurochem.">
        <title>Gamma-aminobutyric acid A receptor heterogeneity is increased by alternative splicing of a novel beta-subunit gene transcript.</title>
        <authorList>
            <person name="Bateson A.N."/>
            <person name="Lasham A."/>
            <person name="Darlison M.G."/>
        </authorList>
    </citation>
    <scope>NUCLEOTIDE SEQUENCE [GENOMIC DNA / MRNA] (ISOFORMS BETA-4 AND BETA-4')</scope>
    <source>
        <strain>Rhode Island</strain>
        <tissue>Brain</tissue>
        <tissue>Liver</tissue>
    </source>
</reference>
<keyword id="KW-0025">Alternative splicing</keyword>
<keyword id="KW-1003">Cell membrane</keyword>
<keyword id="KW-0868">Chloride</keyword>
<keyword id="KW-0869">Chloride channel</keyword>
<keyword id="KW-1015">Disulfide bond</keyword>
<keyword id="KW-0325">Glycoprotein</keyword>
<keyword id="KW-0407">Ion channel</keyword>
<keyword id="KW-0406">Ion transport</keyword>
<keyword id="KW-1071">Ligand-gated ion channel</keyword>
<keyword id="KW-0472">Membrane</keyword>
<keyword id="KW-0628">Postsynaptic cell membrane</keyword>
<keyword id="KW-0675">Receptor</keyword>
<keyword id="KW-1185">Reference proteome</keyword>
<keyword id="KW-0732">Signal</keyword>
<keyword id="KW-0770">Synapse</keyword>
<keyword id="KW-0812">Transmembrane</keyword>
<keyword id="KW-1133">Transmembrane helix</keyword>
<keyword id="KW-0813">Transport</keyword>
<accession>P24045</accession>
<accession>Q6LBM6</accession>
<feature type="signal peptide">
    <location>
        <begin position="1"/>
        <end position="25"/>
    </location>
</feature>
<feature type="chain" id="PRO_0000000466" description="Gamma-aminobutyric acid receptor subunit beta-4">
    <location>
        <begin position="26"/>
        <end position="488"/>
    </location>
</feature>
<feature type="topological domain" description="Extracellular" evidence="4">
    <location>
        <begin position="26"/>
        <end position="244"/>
    </location>
</feature>
<feature type="transmembrane region" description="Helical" evidence="4">
    <location>
        <begin position="245"/>
        <end position="266"/>
    </location>
</feature>
<feature type="transmembrane region" description="Helical" evidence="4">
    <location>
        <begin position="271"/>
        <end position="292"/>
    </location>
</feature>
<feature type="transmembrane region" description="Helical" evidence="4">
    <location>
        <begin position="304"/>
        <end position="326"/>
    </location>
</feature>
<feature type="topological domain" description="Cytoplasmic" evidence="4">
    <location>
        <begin position="327"/>
        <end position="465"/>
    </location>
</feature>
<feature type="transmembrane region" description="Helical" evidence="4">
    <location>
        <begin position="466"/>
        <end position="487"/>
    </location>
</feature>
<feature type="glycosylation site" description="N-linked (GlcNAc...) asparagine" evidence="2">
    <location>
        <position position="32"/>
    </location>
</feature>
<feature type="glycosylation site" description="N-linked (GlcNAc...) asparagine" evidence="2">
    <location>
        <position position="104"/>
    </location>
</feature>
<feature type="glycosylation site" description="N-linked (GlcNAc...) asparagine" evidence="2">
    <location>
        <position position="173"/>
    </location>
</feature>
<feature type="glycosylation site" description="N-linked (GlcNAc...) asparagine" evidence="2">
    <location>
        <position position="195"/>
    </location>
</feature>
<feature type="disulfide bond" evidence="1">
    <location>
        <begin position="160"/>
        <end position="174"/>
    </location>
</feature>
<feature type="splice variant" id="VSP_000089" description="In isoform Beta-4." evidence="3">
    <location>
        <begin position="361"/>
        <end position="364"/>
    </location>
</feature>
<protein>
    <recommendedName>
        <fullName>Gamma-aminobutyric acid receptor subunit beta-4</fullName>
    </recommendedName>
    <alternativeName>
        <fullName>GABA(A) receptor subunit beta-4</fullName>
    </alternativeName>
</protein>
<dbReference type="EMBL" id="X56647">
    <property type="protein sequence ID" value="CAA39969.1"/>
    <property type="molecule type" value="mRNA"/>
</dbReference>
<dbReference type="EMBL" id="X56648">
    <property type="protein sequence ID" value="CAA39970.1"/>
    <property type="status" value="ALT_SEQ"/>
    <property type="molecule type" value="mRNA"/>
</dbReference>
<dbReference type="EMBL" id="X56646">
    <property type="protein sequence ID" value="CAA39968.1"/>
    <property type="molecule type" value="Genomic_DNA"/>
</dbReference>
<dbReference type="PIR" id="JH0359">
    <property type="entry name" value="JH0359"/>
</dbReference>
<dbReference type="RefSeq" id="NP_001161175.1">
    <molecule id="P24045-1"/>
    <property type="nucleotide sequence ID" value="NM_001167703.1"/>
</dbReference>
<dbReference type="RefSeq" id="NP_001161176.1">
    <molecule id="P24045-2"/>
    <property type="nucleotide sequence ID" value="NM_001167704.1"/>
</dbReference>
<dbReference type="SMR" id="P24045"/>
<dbReference type="FunCoup" id="P24045">
    <property type="interactions" value="78"/>
</dbReference>
<dbReference type="STRING" id="9031.ENSGALP00000058040"/>
<dbReference type="GlyCosmos" id="P24045">
    <property type="glycosylation" value="4 sites, No reported glycans"/>
</dbReference>
<dbReference type="GlyGen" id="P24045">
    <property type="glycosylation" value="5 sites"/>
</dbReference>
<dbReference type="PaxDb" id="9031-ENSGALP00000011732"/>
<dbReference type="Ensembl" id="ENSGALT00010036285.1">
    <molecule id="P24045-2"/>
    <property type="protein sequence ID" value="ENSGALP00010021098.1"/>
    <property type="gene ID" value="ENSGALG00010015078.1"/>
</dbReference>
<dbReference type="GeneID" id="396288"/>
<dbReference type="KEGG" id="gga:396288"/>
<dbReference type="CTD" id="55879"/>
<dbReference type="VEuPathDB" id="HostDB:geneid_396288"/>
<dbReference type="eggNOG" id="KOG3643">
    <property type="taxonomic scope" value="Eukaryota"/>
</dbReference>
<dbReference type="GeneTree" id="ENSGT00940000164188"/>
<dbReference type="HOGENOM" id="CLU_010920_0_1_1"/>
<dbReference type="InParanoid" id="P24045"/>
<dbReference type="OMA" id="AVTGMEM"/>
<dbReference type="OrthoDB" id="8890589at2759"/>
<dbReference type="PhylomeDB" id="P24045"/>
<dbReference type="TreeFam" id="TF315453"/>
<dbReference type="Reactome" id="R-GGA-977443">
    <property type="pathway name" value="GABA receptor activation"/>
</dbReference>
<dbReference type="PRO" id="PR:P24045"/>
<dbReference type="Proteomes" id="UP000000539">
    <property type="component" value="Chromosome 4"/>
</dbReference>
<dbReference type="Bgee" id="ENSGALG00000033183">
    <property type="expression patterns" value="Expressed in brain and 2 other cell types or tissues"/>
</dbReference>
<dbReference type="GO" id="GO:0034707">
    <property type="term" value="C:chloride channel complex"/>
    <property type="evidence" value="ECO:0007669"/>
    <property type="project" value="UniProtKB-KW"/>
</dbReference>
<dbReference type="GO" id="GO:1902711">
    <property type="term" value="C:GABA-A receptor complex"/>
    <property type="evidence" value="ECO:0000318"/>
    <property type="project" value="GO_Central"/>
</dbReference>
<dbReference type="GO" id="GO:0045211">
    <property type="term" value="C:postsynaptic membrane"/>
    <property type="evidence" value="ECO:0007669"/>
    <property type="project" value="UniProtKB-SubCell"/>
</dbReference>
<dbReference type="GO" id="GO:0005254">
    <property type="term" value="F:chloride channel activity"/>
    <property type="evidence" value="ECO:0007669"/>
    <property type="project" value="UniProtKB-KW"/>
</dbReference>
<dbReference type="GO" id="GO:0005230">
    <property type="term" value="F:extracellular ligand-gated monoatomic ion channel activity"/>
    <property type="evidence" value="ECO:0007669"/>
    <property type="project" value="InterPro"/>
</dbReference>
<dbReference type="GO" id="GO:0004890">
    <property type="term" value="F:GABA-A receptor activity"/>
    <property type="evidence" value="ECO:0000318"/>
    <property type="project" value="GO_Central"/>
</dbReference>
<dbReference type="GO" id="GO:1902476">
    <property type="term" value="P:chloride transmembrane transport"/>
    <property type="evidence" value="ECO:0000318"/>
    <property type="project" value="GO_Central"/>
</dbReference>
<dbReference type="CDD" id="cd19053">
    <property type="entry name" value="LGIC_TM_GABAAR_beta"/>
    <property type="match status" value="1"/>
</dbReference>
<dbReference type="FunFam" id="1.20.58.390:FF:000004">
    <property type="entry name" value="Gamma-aminobutyric acid receptor subunit beta-2 isoform A"/>
    <property type="match status" value="1"/>
</dbReference>
<dbReference type="FunFam" id="2.70.170.10:FF:000004">
    <property type="entry name" value="Gamma-aminobutyric acid receptor subunit beta-2 isoform A"/>
    <property type="match status" value="1"/>
</dbReference>
<dbReference type="Gene3D" id="2.70.170.10">
    <property type="entry name" value="Neurotransmitter-gated ion-channel ligand-binding domain"/>
    <property type="match status" value="1"/>
</dbReference>
<dbReference type="Gene3D" id="1.20.58.390">
    <property type="entry name" value="Neurotransmitter-gated ion-channel transmembrane domain"/>
    <property type="match status" value="1"/>
</dbReference>
<dbReference type="InterPro" id="IPR006028">
    <property type="entry name" value="GABAA/Glycine_rcpt"/>
</dbReference>
<dbReference type="InterPro" id="IPR002289">
    <property type="entry name" value="GABAAb_rcpt"/>
</dbReference>
<dbReference type="InterPro" id="IPR006202">
    <property type="entry name" value="Neur_chan_lig-bd"/>
</dbReference>
<dbReference type="InterPro" id="IPR036734">
    <property type="entry name" value="Neur_chan_lig-bd_sf"/>
</dbReference>
<dbReference type="InterPro" id="IPR006201">
    <property type="entry name" value="Neur_channel"/>
</dbReference>
<dbReference type="InterPro" id="IPR036719">
    <property type="entry name" value="Neuro-gated_channel_TM_sf"/>
</dbReference>
<dbReference type="InterPro" id="IPR038050">
    <property type="entry name" value="Neuro_actylchol_rec"/>
</dbReference>
<dbReference type="InterPro" id="IPR006029">
    <property type="entry name" value="Neurotrans-gated_channel_TM"/>
</dbReference>
<dbReference type="InterPro" id="IPR018000">
    <property type="entry name" value="Neurotransmitter_ion_chnl_CS"/>
</dbReference>
<dbReference type="NCBIfam" id="TIGR00860">
    <property type="entry name" value="LIC"/>
    <property type="match status" value="1"/>
</dbReference>
<dbReference type="PANTHER" id="PTHR18945">
    <property type="entry name" value="NEUROTRANSMITTER GATED ION CHANNEL"/>
    <property type="match status" value="1"/>
</dbReference>
<dbReference type="Pfam" id="PF02931">
    <property type="entry name" value="Neur_chan_LBD"/>
    <property type="match status" value="1"/>
</dbReference>
<dbReference type="Pfam" id="PF02932">
    <property type="entry name" value="Neur_chan_memb"/>
    <property type="match status" value="1"/>
</dbReference>
<dbReference type="PRINTS" id="PR01160">
    <property type="entry name" value="GABAARBETA"/>
</dbReference>
<dbReference type="PRINTS" id="PR00253">
    <property type="entry name" value="GABAARECEPTR"/>
</dbReference>
<dbReference type="PRINTS" id="PR00252">
    <property type="entry name" value="NRIONCHANNEL"/>
</dbReference>
<dbReference type="SUPFAM" id="SSF90112">
    <property type="entry name" value="Neurotransmitter-gated ion-channel transmembrane pore"/>
    <property type="match status" value="1"/>
</dbReference>
<dbReference type="SUPFAM" id="SSF63712">
    <property type="entry name" value="Nicotinic receptor ligand binding domain-like"/>
    <property type="match status" value="1"/>
</dbReference>
<dbReference type="PROSITE" id="PS00236">
    <property type="entry name" value="NEUROTR_ION_CHANNEL"/>
    <property type="match status" value="1"/>
</dbReference>
<name>GBRB4_CHICK</name>
<comment type="function">
    <text>GABA, the major inhibitory neurotransmitter in the vertebrate brain, mediates neuronal inhibition by binding to the GABA/benzodiazepine receptor and opening an integral chloride channel.</text>
</comment>
<comment type="subunit">
    <text>Generally pentameric. There are five types of GABA(A) receptor chains: alpha, beta, gamma, delta, and rho.</text>
</comment>
<comment type="subcellular location">
    <subcellularLocation>
        <location>Postsynaptic cell membrane</location>
        <topology>Multi-pass membrane protein</topology>
    </subcellularLocation>
    <subcellularLocation>
        <location>Cell membrane</location>
        <topology>Multi-pass membrane protein</topology>
    </subcellularLocation>
</comment>
<comment type="alternative products">
    <event type="alternative splicing"/>
    <isoform>
        <id>P24045-1</id>
        <name>Beta-4'</name>
        <sequence type="displayed"/>
    </isoform>
    <isoform>
        <id>P24045-2</id>
        <name>Beta-4</name>
        <sequence type="described" ref="VSP_000089"/>
    </isoform>
</comment>
<comment type="similarity">
    <text evidence="4">Belongs to the ligand-gated ion channel (TC 1.A.9) family. Gamma-aminobutyric acid receptor (TC 1.A.9.5) subfamily. GABRB4 sub-subfamily.</text>
</comment>
<gene>
    <name type="primary">GABRB4</name>
</gene>
<organism>
    <name type="scientific">Gallus gallus</name>
    <name type="common">Chicken</name>
    <dbReference type="NCBI Taxonomy" id="9031"/>
    <lineage>
        <taxon>Eukaryota</taxon>
        <taxon>Metazoa</taxon>
        <taxon>Chordata</taxon>
        <taxon>Craniata</taxon>
        <taxon>Vertebrata</taxon>
        <taxon>Euteleostomi</taxon>
        <taxon>Archelosauria</taxon>
        <taxon>Archosauria</taxon>
        <taxon>Dinosauria</taxon>
        <taxon>Saurischia</taxon>
        <taxon>Theropoda</taxon>
        <taxon>Coelurosauria</taxon>
        <taxon>Aves</taxon>
        <taxon>Neognathae</taxon>
        <taxon>Galloanserae</taxon>
        <taxon>Galliformes</taxon>
        <taxon>Phasianidae</taxon>
        <taxon>Phasianinae</taxon>
        <taxon>Gallus</taxon>
    </lineage>
</organism>
<sequence length="488" mass="56069">MWTFQADRLSGIVSALAALCVACCAQSPSTGNISVVKEIVDKLLKGYDVRLRPDFGGNPVTVGMSIHISSIDQISEVNMDYTITMYFQQSWRDKRLAYNDLPLNLTLDNRVADQLWLPDTYFLNDKKSFLHGVTVKNRMIRLHPDGTVLYGLRITTTAACMMDLRRYPLDQQNCTLEIESYGYTVDDIVFFWQGNDSAVTGMEVLELPQFTIIEQRLVSREVVFTTGSYLRLSLSFRIKRNIGYFILQTYMPSILITILSWVSFWINYDASAARVALGVTTVLTMTTINTHLRETLPKIPYVKAIDVYLMGCFVFVFLALLEYAFVNYIFFGRGPRQQKKQSERISKANNERHRYEEKRVREQVDPYGNILLSTLDMNNELLATDMMSSVGDSRNSVMSFEGSGIQFRKPLASRDGFGHHPTLDRHVPLTHHAAARNRANCRLRRRSSKLKLKIPDLTDVSTIDKWSRIIFPITFGFFNLVYWLYYVN</sequence>